<feature type="chain" id="PRO_1000076351" description="Tryptophan synthase alpha chain">
    <location>
        <begin position="1"/>
        <end position="267"/>
    </location>
</feature>
<feature type="active site" description="Proton acceptor" evidence="1">
    <location>
        <position position="44"/>
    </location>
</feature>
<feature type="active site" description="Proton acceptor" evidence="1">
    <location>
        <position position="55"/>
    </location>
</feature>
<reference key="1">
    <citation type="journal article" date="2009" name="Infect. Immun.">
        <title>Comparative genomics reveal extensive transposon-mediated genomic plasticity and diversity among potential effector proteins within the genus Coxiella.</title>
        <authorList>
            <person name="Beare P.A."/>
            <person name="Unsworth N."/>
            <person name="Andoh M."/>
            <person name="Voth D.E."/>
            <person name="Omsland A."/>
            <person name="Gilk S.D."/>
            <person name="Williams K.P."/>
            <person name="Sobral B.W."/>
            <person name="Kupko J.J. III"/>
            <person name="Porcella S.F."/>
            <person name="Samuel J.E."/>
            <person name="Heinzen R.A."/>
        </authorList>
    </citation>
    <scope>NUCLEOTIDE SEQUENCE [LARGE SCALE GENOMIC DNA]</scope>
    <source>
        <strain>Dugway 5J108-111</strain>
    </source>
</reference>
<gene>
    <name evidence="1" type="primary">trpA</name>
    <name type="ordered locus">CBUD_1255</name>
</gene>
<name>TRPA_COXBN</name>
<accession>A9KE95</accession>
<evidence type="ECO:0000255" key="1">
    <source>
        <dbReference type="HAMAP-Rule" id="MF_00131"/>
    </source>
</evidence>
<keyword id="KW-0028">Amino-acid biosynthesis</keyword>
<keyword id="KW-0057">Aromatic amino acid biosynthesis</keyword>
<keyword id="KW-0456">Lyase</keyword>
<keyword id="KW-0822">Tryptophan biosynthesis</keyword>
<dbReference type="EC" id="4.2.1.20" evidence="1"/>
<dbReference type="EMBL" id="CP000733">
    <property type="protein sequence ID" value="ABS77457.1"/>
    <property type="molecule type" value="Genomic_DNA"/>
</dbReference>
<dbReference type="RefSeq" id="WP_010958043.1">
    <property type="nucleotide sequence ID" value="NC_009727.1"/>
</dbReference>
<dbReference type="SMR" id="A9KE95"/>
<dbReference type="KEGG" id="cbd:CBUD_1255"/>
<dbReference type="HOGENOM" id="CLU_016734_0_0_6"/>
<dbReference type="UniPathway" id="UPA00035">
    <property type="reaction ID" value="UER00044"/>
</dbReference>
<dbReference type="Proteomes" id="UP000008555">
    <property type="component" value="Chromosome"/>
</dbReference>
<dbReference type="GO" id="GO:0005829">
    <property type="term" value="C:cytosol"/>
    <property type="evidence" value="ECO:0007669"/>
    <property type="project" value="TreeGrafter"/>
</dbReference>
<dbReference type="GO" id="GO:0004834">
    <property type="term" value="F:tryptophan synthase activity"/>
    <property type="evidence" value="ECO:0007669"/>
    <property type="project" value="UniProtKB-UniRule"/>
</dbReference>
<dbReference type="CDD" id="cd04724">
    <property type="entry name" value="Tryptophan_synthase_alpha"/>
    <property type="match status" value="1"/>
</dbReference>
<dbReference type="FunFam" id="3.20.20.70:FF:000037">
    <property type="entry name" value="Tryptophan synthase alpha chain"/>
    <property type="match status" value="1"/>
</dbReference>
<dbReference type="Gene3D" id="3.20.20.70">
    <property type="entry name" value="Aldolase class I"/>
    <property type="match status" value="1"/>
</dbReference>
<dbReference type="HAMAP" id="MF_00131">
    <property type="entry name" value="Trp_synth_alpha"/>
    <property type="match status" value="1"/>
</dbReference>
<dbReference type="InterPro" id="IPR013785">
    <property type="entry name" value="Aldolase_TIM"/>
</dbReference>
<dbReference type="InterPro" id="IPR011060">
    <property type="entry name" value="RibuloseP-bd_barrel"/>
</dbReference>
<dbReference type="InterPro" id="IPR018204">
    <property type="entry name" value="Trp_synthase_alpha_AS"/>
</dbReference>
<dbReference type="InterPro" id="IPR002028">
    <property type="entry name" value="Trp_synthase_suA"/>
</dbReference>
<dbReference type="NCBIfam" id="TIGR00262">
    <property type="entry name" value="trpA"/>
    <property type="match status" value="1"/>
</dbReference>
<dbReference type="PANTHER" id="PTHR43406:SF1">
    <property type="entry name" value="TRYPTOPHAN SYNTHASE ALPHA CHAIN, CHLOROPLASTIC"/>
    <property type="match status" value="1"/>
</dbReference>
<dbReference type="PANTHER" id="PTHR43406">
    <property type="entry name" value="TRYPTOPHAN SYNTHASE, ALPHA CHAIN"/>
    <property type="match status" value="1"/>
</dbReference>
<dbReference type="Pfam" id="PF00290">
    <property type="entry name" value="Trp_syntA"/>
    <property type="match status" value="1"/>
</dbReference>
<dbReference type="SUPFAM" id="SSF51366">
    <property type="entry name" value="Ribulose-phoshate binding barrel"/>
    <property type="match status" value="1"/>
</dbReference>
<dbReference type="PROSITE" id="PS00167">
    <property type="entry name" value="TRP_SYNTHASE_ALPHA"/>
    <property type="match status" value="1"/>
</dbReference>
<proteinExistence type="inferred from homology"/>
<organism>
    <name type="scientific">Coxiella burnetii (strain Dugway 5J108-111)</name>
    <dbReference type="NCBI Taxonomy" id="434922"/>
    <lineage>
        <taxon>Bacteria</taxon>
        <taxon>Pseudomonadati</taxon>
        <taxon>Pseudomonadota</taxon>
        <taxon>Gammaproteobacteria</taxon>
        <taxon>Legionellales</taxon>
        <taxon>Coxiellaceae</taxon>
        <taxon>Coxiella</taxon>
    </lineage>
</organism>
<sequence length="267" mass="28924">MNRIEQQFKKSPAYVAYLTAGDGGLERSLESLLALAKGGVNILEVGVPFSDPVADGPVIQEASIRALAQGTTLHDVLTLITSFRQHSEIPIILFTYFNPLLAAGDKIYQQMKSAGVDGCLVVDLPVEEAAPHLTACKTAKIAPILLISPSTTQERLKKINEHGEGMLYYVCRPGTTGVRATLPENFPAKMNQIKSMTSLPIVTGFGIANRKMAAQALQYADGFVIGSLFVKAIAEGISKNALTRLAQSLNPHYPNLRLITPFRKKTF</sequence>
<comment type="function">
    <text evidence="1">The alpha subunit is responsible for the aldol cleavage of indoleglycerol phosphate to indole and glyceraldehyde 3-phosphate.</text>
</comment>
<comment type="catalytic activity">
    <reaction evidence="1">
        <text>(1S,2R)-1-C-(indol-3-yl)glycerol 3-phosphate + L-serine = D-glyceraldehyde 3-phosphate + L-tryptophan + H2O</text>
        <dbReference type="Rhea" id="RHEA:10532"/>
        <dbReference type="ChEBI" id="CHEBI:15377"/>
        <dbReference type="ChEBI" id="CHEBI:33384"/>
        <dbReference type="ChEBI" id="CHEBI:57912"/>
        <dbReference type="ChEBI" id="CHEBI:58866"/>
        <dbReference type="ChEBI" id="CHEBI:59776"/>
        <dbReference type="EC" id="4.2.1.20"/>
    </reaction>
</comment>
<comment type="pathway">
    <text evidence="1">Amino-acid biosynthesis; L-tryptophan biosynthesis; L-tryptophan from chorismate: step 5/5.</text>
</comment>
<comment type="subunit">
    <text evidence="1">Tetramer of two alpha and two beta chains.</text>
</comment>
<comment type="similarity">
    <text evidence="1">Belongs to the TrpA family.</text>
</comment>
<protein>
    <recommendedName>
        <fullName evidence="1">Tryptophan synthase alpha chain</fullName>
        <ecNumber evidence="1">4.2.1.20</ecNumber>
    </recommendedName>
</protein>